<feature type="chain" id="PRO_0000422239" description="Calcium homeostasis modulator protein 1">
    <location>
        <begin position="1"/>
        <end position="348"/>
    </location>
</feature>
<feature type="topological domain" description="Cytoplasmic" evidence="12">
    <location>
        <begin position="1"/>
        <end position="20"/>
    </location>
</feature>
<feature type="transmembrane region" description="Helical; Name=S1" evidence="1 2">
    <location>
        <begin position="21"/>
        <end position="36"/>
    </location>
</feature>
<feature type="topological domain" description="Extracellular" evidence="12">
    <location>
        <begin position="37"/>
        <end position="48"/>
    </location>
</feature>
<feature type="transmembrane region" description="Helical; Name=S2" evidence="1 2">
    <location>
        <begin position="49"/>
        <end position="71"/>
    </location>
</feature>
<feature type="topological domain" description="Cytoplasmic" evidence="12">
    <location>
        <begin position="72"/>
        <end position="98"/>
    </location>
</feature>
<feature type="transmembrane region" description="Helical; Name=S3" evidence="1 2">
    <location>
        <begin position="99"/>
        <end position="124"/>
    </location>
</feature>
<feature type="topological domain" description="Extracellular" evidence="12">
    <location>
        <begin position="125"/>
        <end position="179"/>
    </location>
</feature>
<feature type="transmembrane region" description="Helical; Name=S4" evidence="1 2">
    <location>
        <begin position="180"/>
        <end position="205"/>
    </location>
</feature>
<feature type="topological domain" description="Cytoplasmic" evidence="12">
    <location>
        <begin position="206"/>
        <end position="348"/>
    </location>
</feature>
<feature type="region of interest" description="Central pore" evidence="1">
    <location>
        <begin position="9"/>
        <end position="36"/>
    </location>
</feature>
<feature type="region of interest" description="Phospholipid-binding" evidence="2">
    <location>
        <begin position="62"/>
        <end position="69"/>
    </location>
</feature>
<feature type="region of interest" description="Phospholipid-binding" evidence="2">
    <location>
        <begin position="104"/>
        <end position="116"/>
    </location>
</feature>
<feature type="region of interest" description="Phospholipid-binding" evidence="2">
    <location>
        <begin position="191"/>
        <end position="201"/>
    </location>
</feature>
<feature type="region of interest" description="Disordered" evidence="3">
    <location>
        <begin position="324"/>
        <end position="348"/>
    </location>
</feature>
<feature type="lipid moiety-binding region" description="S-palmitoyl cysteine" evidence="13">
    <location>
        <position position="100"/>
    </location>
</feature>
<feature type="lipid moiety-binding region" description="S-palmitoyl cysteine" evidence="13">
    <location>
        <position position="207"/>
    </location>
</feature>
<feature type="glycosylation site" description="N-linked (GlcNAc...) asparagine" evidence="14">
    <location>
        <position position="139"/>
    </location>
</feature>
<feature type="disulfide bond" evidence="2">
    <location>
        <begin position="41"/>
        <end position="126"/>
    </location>
</feature>
<feature type="disulfide bond" evidence="2">
    <location>
        <begin position="43"/>
        <end position="160"/>
    </location>
</feature>
<feature type="mutagenesis site" description="Increases channel trafficking to the plasma membrane and ATP release." evidence="7">
    <original>C</original>
    <variation>S</variation>
    <location>
        <position position="23"/>
    </location>
</feature>
<feature type="mutagenesis site" description="Affects basolateral membrane sorting in vitro but not in vivo; when associated with A-222 and A-225." evidence="9">
    <original>ML</original>
    <variation>AA</variation>
    <location>
        <begin position="76"/>
        <end position="77"/>
    </location>
</feature>
<feature type="mutagenesis site" description="Decreases palmitoylation and only slightly increases channel activity. Has no significant effect on channel trafficking to the plasma membrane. Loss of palmitoylation, gain-of-function and high cytotoxicity; when associated with S-207." evidence="7">
    <original>C</original>
    <variation>S</variation>
    <location>
        <position position="100"/>
    </location>
</feature>
<feature type="mutagenesis site" description="Decreases channel trafficking to the plasma membrane. Abolishes ATP release." evidence="7">
    <original>C</original>
    <variation>S</variation>
    <location>
        <position position="123"/>
    </location>
</feature>
<feature type="mutagenesis site" description="Decreases channel trafficking to the plasma membrane. Abolishes ATP release." evidence="7">
    <original>C</original>
    <variation>S</variation>
    <location>
        <position position="126"/>
    </location>
</feature>
<feature type="mutagenesis site" description="Loss of N-glycosylation associated with enhanced proteosomal degradation and impaired channel trafficking to plasma membrane." evidence="10">
    <original>N</original>
    <variation>Q</variation>
    <location>
        <position position="139"/>
    </location>
</feature>
<feature type="mutagenesis site" description="Has no significant effect on ATP release or channel trafficking to the plasma membrane. Loss of palmitoylation, gain-of-function and high cytotoxicity; when associated with S-100." evidence="7">
    <original>C</original>
    <variation>S</variation>
    <location>
        <position position="207"/>
    </location>
</feature>
<feature type="mutagenesis site" description="Affects basolateral membrane sorting in vitro but not in vivo; when associated with 76-A-A-77 and A-225." evidence="9">
    <original>Y</original>
    <variation>A</variation>
    <location>
        <position position="222"/>
    </location>
</feature>
<feature type="mutagenesis site" description="Affects basolateral membrane sorting in vitro but not in vivo; when associated with 76-A-A-77 and A-222." evidence="9">
    <original>I</original>
    <variation>A</variation>
    <location>
        <position position="225"/>
    </location>
</feature>
<feature type="mutagenesis site" description="Decreases ATP release. Does not affect channel trafficking to the plasma membrane." evidence="7">
    <original>C</original>
    <variation>S</variation>
    <location>
        <position position="234"/>
    </location>
</feature>
<feature type="mutagenesis site" description="Increases channel trafficking to the plasma membrane. Decreases ATP release." evidence="7">
    <original>C</original>
    <variation>S</variation>
    <location>
        <position position="245"/>
    </location>
</feature>
<feature type="mutagenesis site" description="Decreases ATP release. Does not affect channel trafficking to the plasma membrane." evidence="7">
    <original>C</original>
    <variation>S</variation>
    <location>
        <position position="312"/>
    </location>
</feature>
<proteinExistence type="evidence at protein level"/>
<accession>D3Z291</accession>
<gene>
    <name evidence="11 15" type="primary">Calhm1</name>
</gene>
<name>CAHM1_MOUSE</name>
<sequence length="348" mass="38827">MDKFRMIFQFLQSNQESFMNGICGIMALASAQMYSAFDFNCPCLPGYNVVYSLGILLTPPLVLFLLGLVMNNNISMLAEEWKRPAGRRAKDPAVLRYMFCSMAQRALIAPVVWVAVTLLDGKCFLCAFCTAVPVATLGNGSLVPGLPAPELARLLARVPCPEIYDGNWLLAREVAVRYLRCISQALGWSFVLLTTLLAFVVRSVRPCFTQVAFLKSKYWSHYIDIERKLFDETCTEHAKAFAKVCIQQFFEAMNHDLELGHTHGVLATATATATATEAVQSPSDRTEEEREKLRGITDQGTMNRLLTSWHKCKPPLRLGQEAPLMSNGWAGGEPRPPRKEVATYFSKV</sequence>
<comment type="function">
    <text evidence="2 4 6 8 10">Pore-forming subunit of gustatory voltage-gated ion channels required for sensory perception of sweet, bitter and umami tastes (PubMed:23467090). With CALHM3 forms a fast-activating voltage-gated ATP-release channel in type II taste bud cells, ATP acting as a neurotransmitter to activate afferent neural gustatory pathways (PubMed:23467090, PubMed:29681531). Acts both as a voltage-gated and calcium-activated ion channel: mediates neuronal excitability in response to membrane depolarization and low extracellular Ca(2+) concentration. Has poor ion selectivity and forms a wide pore (around 14 Angstroms) that mediates permeation of small ions including Ca(2+), Na(+), K(+) and Cl(-), as well as larger ions such as ATP(4-) (PubMed:22711817, PubMed:28734079, PubMed:29681531, PubMed:33788965). Mediates Ca(2+) influx and downstream activation of the ERK1 and ERK2 cascade in neurons (By similarity). Triggers endoplasmic reticulum stress by reducing the calcium content of the endoplasmic reticulum (By similarity). May indirectly control amyloid precursor protein (APP) proteolysis and aggregated amyloid-beta (Abeta) peptides levels in a Ca(2+) dependent manner (By similarity).</text>
</comment>
<comment type="catalytic activity">
    <reaction evidence="6 7 8 10">
        <text>ATP(in) = ATP(out)</text>
        <dbReference type="Rhea" id="RHEA:75687"/>
        <dbReference type="ChEBI" id="CHEBI:30616"/>
    </reaction>
</comment>
<comment type="catalytic activity">
    <reaction evidence="8">
        <text>Ca(2+)(in) = Ca(2+)(out)</text>
        <dbReference type="Rhea" id="RHEA:29671"/>
        <dbReference type="ChEBI" id="CHEBI:29108"/>
    </reaction>
</comment>
<comment type="catalytic activity">
    <reaction evidence="2">
        <text>Mg(2+)(in) = Mg(2+)(out)</text>
        <dbReference type="Rhea" id="RHEA:29827"/>
        <dbReference type="ChEBI" id="CHEBI:18420"/>
    </reaction>
</comment>
<comment type="catalytic activity">
    <reaction evidence="8">
        <text>Na(+)(in) = Na(+)(out)</text>
        <dbReference type="Rhea" id="RHEA:34963"/>
        <dbReference type="ChEBI" id="CHEBI:29101"/>
    </reaction>
</comment>
<comment type="catalytic activity">
    <reaction evidence="8">
        <text>K(+)(in) = K(+)(out)</text>
        <dbReference type="Rhea" id="RHEA:29463"/>
        <dbReference type="ChEBI" id="CHEBI:29103"/>
    </reaction>
</comment>
<comment type="catalytic activity">
    <reaction evidence="2">
        <text>Li(+)(in) = Li(+)(out)</text>
        <dbReference type="Rhea" id="RHEA:78551"/>
        <dbReference type="ChEBI" id="CHEBI:49713"/>
    </reaction>
</comment>
<comment type="catalytic activity">
    <reaction evidence="2">
        <text>Rb(+)(in) = Rb(+)(out)</text>
        <dbReference type="Rhea" id="RHEA:78547"/>
        <dbReference type="ChEBI" id="CHEBI:49847"/>
    </reaction>
</comment>
<comment type="catalytic activity">
    <reaction evidence="2">
        <text>Cs(+)(in) = Cs(+)(out)</text>
        <dbReference type="Rhea" id="RHEA:78555"/>
        <dbReference type="ChEBI" id="CHEBI:49547"/>
    </reaction>
</comment>
<comment type="catalytic activity">
    <reaction evidence="8">
        <text>chloride(in) = chloride(out)</text>
        <dbReference type="Rhea" id="RHEA:29823"/>
        <dbReference type="ChEBI" id="CHEBI:17996"/>
    </reaction>
</comment>
<comment type="activity regulation">
    <text evidence="2">Regulated by membrane voltage and extracellular Ca(2+). Inhibited by Gd(3+), ruthenium red, and Zn(2+) and partially inhibited by 2-aminoethoxydiphenyl borate.</text>
</comment>
<comment type="subunit">
    <text evidence="2 8">Oligomerizes to form hexamers and octamers. Does not form gap junctions (By similarity). Associates with CALHM3 as a pore-forming subunit in a hetero-hexameric channel complex (PubMed:29681531).</text>
</comment>
<comment type="subcellular location">
    <subcellularLocation>
        <location evidence="2">Cell membrane</location>
        <topology evidence="2">Multi-pass membrane protein</topology>
    </subcellularLocation>
    <subcellularLocation>
        <location evidence="2">Endoplasmic reticulum membrane</location>
        <topology evidence="2">Multi-pass membrane protein</topology>
    </subcellularLocation>
    <subcellularLocation>
        <location evidence="9">Basolateral cell membrane</location>
        <topology>Multi-pass membrane protein</topology>
    </subcellularLocation>
    <text evidence="2 9">Localizes to the basolateral membrane of epithelial cells including taste cells (PubMed:30804437). Colocalizes with HSPA5 at the endoplasmic reticulum (By similarity).</text>
</comment>
<comment type="tissue specificity">
    <text evidence="4 5 6">Specifically expressed in type II taste bud cells (at protein level). Not expressed in brain.</text>
</comment>
<comment type="domain">
    <text evidence="2">A phospholipid-binding pocket is formed between conserved regions of S3 and S4 helices of one subunit and S2 of the adjacent subunit. It may regulate channel assembly and gating.</text>
</comment>
<comment type="PTM">
    <text evidence="10">N-glycosylated. Assembly with CALHM3 is associated with N-glycan remodeling and formation of hybrid complex- and high mannose-type glycochains. This N-glycan processing regulates channel trafficking and gating kinetics.</text>
</comment>
<comment type="PTM">
    <text evidence="7">Palmitoylated by ZDHHC3, ZDHHC20 and possibly ZDHHC7. Palmitoylation regulates voltage-dependent gating of the channel by shifting it toward more depolarized potentials.</text>
</comment>
<comment type="disruption phenotype">
    <text evidence="5 6">Impaired perceptions of sweet, bitter and umami compounds. Mice are viable and fertile, with no visible morphological abnormalities in their taste buds or any altered expression of taste-related marker genes. They do however display a loss of both preference for sweet and umami compounds and for avoidance of bitter compounds. Perceptions of sour and salty tastes are unaffected. Reduced voltage-gated currents in type II cells and taste-evoked ATP release from taste buds without affecting the excitability of taste cells by taste stimuli. Elderly males and females do not show defects in spatial learning and memory retrieving.</text>
</comment>
<comment type="similarity">
    <text evidence="12">Belongs to the CALHM family.</text>
</comment>
<reference key="1">
    <citation type="journal article" date="2009" name="PLoS Biol.">
        <title>Lineage-specific biology revealed by a finished genome assembly of the mouse.</title>
        <authorList>
            <person name="Church D.M."/>
            <person name="Goodstadt L."/>
            <person name="Hillier L.W."/>
            <person name="Zody M.C."/>
            <person name="Goldstein S."/>
            <person name="She X."/>
            <person name="Bult C.J."/>
            <person name="Agarwala R."/>
            <person name="Cherry J.L."/>
            <person name="DiCuccio M."/>
            <person name="Hlavina W."/>
            <person name="Kapustin Y."/>
            <person name="Meric P."/>
            <person name="Maglott D."/>
            <person name="Birtle Z."/>
            <person name="Marques A.C."/>
            <person name="Graves T."/>
            <person name="Zhou S."/>
            <person name="Teague B."/>
            <person name="Potamousis K."/>
            <person name="Churas C."/>
            <person name="Place M."/>
            <person name="Herschleb J."/>
            <person name="Runnheim R."/>
            <person name="Forrest D."/>
            <person name="Amos-Landgraf J."/>
            <person name="Schwartz D.C."/>
            <person name="Cheng Z."/>
            <person name="Lindblad-Toh K."/>
            <person name="Eichler E.E."/>
            <person name="Ponting C.P."/>
        </authorList>
    </citation>
    <scope>NUCLEOTIDE SEQUENCE [LARGE SCALE GENOMIC DNA]</scope>
    <source>
        <strain>C57BL/6J</strain>
    </source>
</reference>
<reference key="2">
    <citation type="submission" date="2005-07" db="EMBL/GenBank/DDBJ databases">
        <authorList>
            <person name="Mural R.J."/>
            <person name="Adams M.D."/>
            <person name="Myers E.W."/>
            <person name="Smith H.O."/>
            <person name="Venter J.C."/>
        </authorList>
    </citation>
    <scope>NUCLEOTIDE SEQUENCE [LARGE SCALE GENOMIC DNA]</scope>
</reference>
<reference key="3">
    <citation type="journal article" date="2012" name="Proc. Natl. Acad. Sci. U.S.A.">
        <title>Calcium homeostasis modulator 1 (CALHM1) is the pore-forming subunit of an ion channel that mediates extracellular Ca2+ regulation of neuronal excitability.</title>
        <authorList>
            <person name="Ma Z."/>
            <person name="Siebert A.P."/>
            <person name="Cheung K.H."/>
            <person name="Lee R.J."/>
            <person name="Johnson B."/>
            <person name="Cohen A.S."/>
            <person name="Vingtdeux V."/>
            <person name="Marambaud P."/>
            <person name="Foskett J.K."/>
        </authorList>
    </citation>
    <scope>FUNCTION</scope>
    <scope>TISSUE SPECIFICITY</scope>
</reference>
<reference key="4">
    <citation type="journal article" date="2012" name="Protein Cell">
        <title>Generation of Calhm1 knockout mouse and characterization of calhm1 gene expression.</title>
        <authorList>
            <person name="Wu J."/>
            <person name="Peng S."/>
            <person name="Wu R."/>
            <person name="Hao Y."/>
            <person name="Ji G."/>
            <person name="Yuan Z."/>
        </authorList>
    </citation>
    <scope>DISRUPTION PHENOTYPE</scope>
    <scope>TISSUE SPECIFICITY</scope>
</reference>
<reference key="5">
    <citation type="journal article" date="2013" name="Nature">
        <title>CALHM1 ion channel mediates purinergic neurotransmission of sweet, bitter and umami tastes.</title>
        <authorList>
            <person name="Taruno A."/>
            <person name="Vingtdeux V."/>
            <person name="Ohmoto M."/>
            <person name="Ma Z."/>
            <person name="Dvoryanchikov G."/>
            <person name="Li A."/>
            <person name="Adrien L."/>
            <person name="Zhao H."/>
            <person name="Leung S."/>
            <person name="Abernethy M."/>
            <person name="Koppel J."/>
            <person name="Davies P."/>
            <person name="Civan M.M."/>
            <person name="Chaudhari N."/>
            <person name="Matsumoto I."/>
            <person name="Hellekant G."/>
            <person name="Tordoff M.G."/>
            <person name="Marambaud P."/>
            <person name="Foskett J.K."/>
        </authorList>
    </citation>
    <scope>FUNCTION</scope>
    <scope>TRANSPORTER ACTIVITY</scope>
    <scope>TISSUE SPECIFICITY</scope>
    <scope>DISRUPTION PHENOTYPE</scope>
</reference>
<reference key="6">
    <citation type="journal article" date="2017" name="J. Physiol. (Lond.)">
        <title>Post-translational palmitoylation controls the voltage gating and lipid raft association of the CALHM1 channel.</title>
        <authorList>
            <person name="Taruno A."/>
            <person name="Sun H."/>
            <person name="Nakajo K."/>
            <person name="Murakami T."/>
            <person name="Ohsaki Y."/>
            <person name="Kido M.A."/>
            <person name="Ono F."/>
            <person name="Marunaka Y."/>
        </authorList>
    </citation>
    <scope>FUNCTION</scope>
    <scope>TRANSPORTER ACTIVITY</scope>
    <scope>PALMITOYLATION AT CYS-100 AND CYS-207</scope>
    <scope>MUTAGENESIS OF CYS-23; CYS-100; CYS-123; CYS-126; CYS-207; CYS-234; CYS-245 AND CYS-312</scope>
</reference>
<reference key="7">
    <citation type="journal article" date="2018" name="Neuron">
        <title>CALHM3 Is Essential for Rapid Ion Channel-Mediated Purinergic Neurotransmission of GPCR-Mediated Tastes.</title>
        <authorList>
            <person name="Ma Z."/>
            <person name="Taruno A."/>
            <person name="Ohmoto M."/>
            <person name="Jyotaki M."/>
            <person name="Lim J.C."/>
            <person name="Miyazaki H."/>
            <person name="Niisato N."/>
            <person name="Marunaka Y."/>
            <person name="Lee R.J."/>
            <person name="Hoff H."/>
            <person name="Payne R."/>
            <person name="Demuro A."/>
            <person name="Parker I."/>
            <person name="Mitchell C.H."/>
            <person name="Henao-Mejia J."/>
            <person name="Tanis J.E."/>
            <person name="Matsumoto I."/>
            <person name="Tordoff M.G."/>
            <person name="Foskett J.K."/>
        </authorList>
    </citation>
    <scope>FUNCTION</scope>
    <scope>TRANSPORTER ACTIVITY</scope>
    <scope>INTERACTION WITH CALHM3</scope>
</reference>
<reference key="8">
    <citation type="journal article" date="2019" name="Sci. Rep.">
        <title>CALHM1/CALHM3 channel is intrinsically sorted to the basolateral membrane of epithelial cells including taste cells.</title>
        <authorList>
            <person name="Kashio M."/>
            <person name="Wei-Qi G."/>
            <person name="Ohsaki Y."/>
            <person name="Kido M.A."/>
            <person name="Taruno A."/>
        </authorList>
    </citation>
    <scope>SUBCELLULAR LOCATION</scope>
    <scope>MUTAGENESIS OF 76-MET-LEU-77; TYR-222 AND ILE-225</scope>
</reference>
<reference key="9">
    <citation type="journal article" date="2021" name="FASEB J.">
        <title>Posttranslational regulation of CALHM1/3 channel: N-linked glycosylation and S-palmitoylation.</title>
        <authorList>
            <person name="Okui M."/>
            <person name="Murakami T."/>
            <person name="Sun H."/>
            <person name="Ikeshita C."/>
            <person name="Kanamura N."/>
            <person name="Taruno A."/>
        </authorList>
    </citation>
    <scope>FUNCTION</scope>
    <scope>TRANSPORTER ACTIVITY</scope>
    <scope>GLYCOSYLATION AT ASN-139</scope>
    <scope>MUTAGENESIS OF ASN-139</scope>
</reference>
<keyword id="KW-0106">Calcium</keyword>
<keyword id="KW-0107">Calcium channel</keyword>
<keyword id="KW-0109">Calcium transport</keyword>
<keyword id="KW-1003">Cell membrane</keyword>
<keyword id="KW-1015">Disulfide bond</keyword>
<keyword id="KW-0256">Endoplasmic reticulum</keyword>
<keyword id="KW-0325">Glycoprotein</keyword>
<keyword id="KW-0407">Ion channel</keyword>
<keyword id="KW-0406">Ion transport</keyword>
<keyword id="KW-0449">Lipoprotein</keyword>
<keyword id="KW-0472">Membrane</keyword>
<keyword id="KW-0564">Palmitate</keyword>
<keyword id="KW-1185">Reference proteome</keyword>
<keyword id="KW-0716">Sensory transduction</keyword>
<keyword id="KW-0919">Taste</keyword>
<keyword id="KW-0812">Transmembrane</keyword>
<keyword id="KW-1133">Transmembrane helix</keyword>
<keyword id="KW-0813">Transport</keyword>
<evidence type="ECO:0000250" key="1">
    <source>
        <dbReference type="UniProtKB" id="H2MCM1"/>
    </source>
</evidence>
<evidence type="ECO:0000250" key="2">
    <source>
        <dbReference type="UniProtKB" id="Q8IU99"/>
    </source>
</evidence>
<evidence type="ECO:0000256" key="3">
    <source>
        <dbReference type="SAM" id="MobiDB-lite"/>
    </source>
</evidence>
<evidence type="ECO:0000269" key="4">
    <source>
    </source>
</evidence>
<evidence type="ECO:0000269" key="5">
    <source>
    </source>
</evidence>
<evidence type="ECO:0000269" key="6">
    <source>
    </source>
</evidence>
<evidence type="ECO:0000269" key="7">
    <source>
    </source>
</evidence>
<evidence type="ECO:0000269" key="8">
    <source>
    </source>
</evidence>
<evidence type="ECO:0000269" key="9">
    <source>
    </source>
</evidence>
<evidence type="ECO:0000269" key="10">
    <source>
    </source>
</evidence>
<evidence type="ECO:0000303" key="11">
    <source>
    </source>
</evidence>
<evidence type="ECO:0000305" key="12"/>
<evidence type="ECO:0000305" key="13">
    <source>
    </source>
</evidence>
<evidence type="ECO:0000305" key="14">
    <source>
    </source>
</evidence>
<evidence type="ECO:0000312" key="15">
    <source>
        <dbReference type="MGI" id="MGI:3643383"/>
    </source>
</evidence>
<protein>
    <recommendedName>
        <fullName>Calcium homeostasis modulator protein 1</fullName>
    </recommendedName>
</protein>
<dbReference type="EMBL" id="AC124724">
    <property type="status" value="NOT_ANNOTATED_CDS"/>
    <property type="molecule type" value="Genomic_DNA"/>
</dbReference>
<dbReference type="EMBL" id="CH466534">
    <property type="protein sequence ID" value="EDL42030.1"/>
    <property type="molecule type" value="Genomic_DNA"/>
</dbReference>
<dbReference type="CCDS" id="CCDS38015.1"/>
<dbReference type="RefSeq" id="NP_001074740.1">
    <property type="nucleotide sequence ID" value="NM_001081271.1"/>
</dbReference>
<dbReference type="SMR" id="D3Z291"/>
<dbReference type="FunCoup" id="D3Z291">
    <property type="interactions" value="666"/>
</dbReference>
<dbReference type="STRING" id="10090.ENSMUSP00000107444"/>
<dbReference type="GlyCosmos" id="D3Z291">
    <property type="glycosylation" value="1 site, No reported glycans"/>
</dbReference>
<dbReference type="GlyGen" id="D3Z291">
    <property type="glycosylation" value="1 site"/>
</dbReference>
<dbReference type="iPTMnet" id="D3Z291"/>
<dbReference type="PhosphoSitePlus" id="D3Z291"/>
<dbReference type="SwissPalm" id="D3Z291"/>
<dbReference type="PaxDb" id="10090-ENSMUSP00000107444"/>
<dbReference type="Antibodypedia" id="3119">
    <property type="antibodies" value="156 antibodies from 29 providers"/>
</dbReference>
<dbReference type="Ensembl" id="ENSMUST00000111813.3">
    <property type="protein sequence ID" value="ENSMUSP00000107444.2"/>
    <property type="gene ID" value="ENSMUSG00000079258.3"/>
</dbReference>
<dbReference type="GeneID" id="546729"/>
<dbReference type="KEGG" id="mmu:546729"/>
<dbReference type="UCSC" id="uc008hus.1">
    <property type="organism name" value="mouse"/>
</dbReference>
<dbReference type="AGR" id="MGI:3643383"/>
<dbReference type="CTD" id="255022"/>
<dbReference type="MGI" id="MGI:3643383">
    <property type="gene designation" value="Calhm1"/>
</dbReference>
<dbReference type="VEuPathDB" id="HostDB:ENSMUSG00000079258"/>
<dbReference type="eggNOG" id="ENOG502RCIV">
    <property type="taxonomic scope" value="Eukaryota"/>
</dbReference>
<dbReference type="GeneTree" id="ENSGT01030000234610"/>
<dbReference type="HOGENOM" id="CLU_069286_0_0_1"/>
<dbReference type="InParanoid" id="D3Z291"/>
<dbReference type="OMA" id="WHRCKPP"/>
<dbReference type="OrthoDB" id="5978124at2759"/>
<dbReference type="PhylomeDB" id="D3Z291"/>
<dbReference type="TreeFam" id="TF329085"/>
<dbReference type="BioGRID-ORCS" id="546729">
    <property type="hits" value="3 hits in 77 CRISPR screens"/>
</dbReference>
<dbReference type="PRO" id="PR:D3Z291"/>
<dbReference type="Proteomes" id="UP000000589">
    <property type="component" value="Chromosome 19"/>
</dbReference>
<dbReference type="RNAct" id="D3Z291">
    <property type="molecule type" value="protein"/>
</dbReference>
<dbReference type="ExpressionAtlas" id="D3Z291">
    <property type="expression patterns" value="differential"/>
</dbReference>
<dbReference type="GO" id="GO:0016323">
    <property type="term" value="C:basolateral plasma membrane"/>
    <property type="evidence" value="ECO:0000314"/>
    <property type="project" value="UniProtKB"/>
</dbReference>
<dbReference type="GO" id="GO:0005789">
    <property type="term" value="C:endoplasmic reticulum membrane"/>
    <property type="evidence" value="ECO:0007669"/>
    <property type="project" value="UniProtKB-SubCell"/>
</dbReference>
<dbReference type="GO" id="GO:0005886">
    <property type="term" value="C:plasma membrane"/>
    <property type="evidence" value="ECO:0000314"/>
    <property type="project" value="UniProtKB"/>
</dbReference>
<dbReference type="GO" id="GO:0044853">
    <property type="term" value="C:plasma membrane raft"/>
    <property type="evidence" value="ECO:0000314"/>
    <property type="project" value="UniProtKB"/>
</dbReference>
<dbReference type="GO" id="GO:0005227">
    <property type="term" value="F:calcium-activated cation channel activity"/>
    <property type="evidence" value="ECO:0000250"/>
    <property type="project" value="UniProtKB"/>
</dbReference>
<dbReference type="GO" id="GO:0042802">
    <property type="term" value="F:identical protein binding"/>
    <property type="evidence" value="ECO:0007669"/>
    <property type="project" value="Ensembl"/>
</dbReference>
<dbReference type="GO" id="GO:0005245">
    <property type="term" value="F:voltage-gated calcium channel activity"/>
    <property type="evidence" value="ECO:0000314"/>
    <property type="project" value="CACAO"/>
</dbReference>
<dbReference type="GO" id="GO:0022832">
    <property type="term" value="F:voltage-gated channel activity"/>
    <property type="evidence" value="ECO:0000314"/>
    <property type="project" value="UniProtKB"/>
</dbReference>
<dbReference type="GO" id="GO:0005244">
    <property type="term" value="F:voltage-gated monoatomic ion channel activity"/>
    <property type="evidence" value="ECO:0000315"/>
    <property type="project" value="UniProtKB"/>
</dbReference>
<dbReference type="GO" id="GO:1904669">
    <property type="term" value="P:ATP export"/>
    <property type="evidence" value="ECO:0000314"/>
    <property type="project" value="UniProtKB"/>
</dbReference>
<dbReference type="GO" id="GO:0015867">
    <property type="term" value="P:ATP transport"/>
    <property type="evidence" value="ECO:0000315"/>
    <property type="project" value="UniProtKB"/>
</dbReference>
<dbReference type="GO" id="GO:0006812">
    <property type="term" value="P:monoatomic cation transport"/>
    <property type="evidence" value="ECO:0000250"/>
    <property type="project" value="UniProtKB"/>
</dbReference>
<dbReference type="GO" id="GO:0051291">
    <property type="term" value="P:protein heterooligomerization"/>
    <property type="evidence" value="ECO:0000314"/>
    <property type="project" value="UniProtKB"/>
</dbReference>
<dbReference type="GO" id="GO:0051260">
    <property type="term" value="P:protein homooligomerization"/>
    <property type="evidence" value="ECO:0000250"/>
    <property type="project" value="UniProtKB"/>
</dbReference>
<dbReference type="GO" id="GO:0034765">
    <property type="term" value="P:regulation of monoatomic ion transmembrane transport"/>
    <property type="evidence" value="ECO:0000250"/>
    <property type="project" value="UniProtKB"/>
</dbReference>
<dbReference type="GO" id="GO:0050913">
    <property type="term" value="P:sensory perception of bitter taste"/>
    <property type="evidence" value="ECO:0000315"/>
    <property type="project" value="UniProtKB"/>
</dbReference>
<dbReference type="GO" id="GO:0050916">
    <property type="term" value="P:sensory perception of sweet taste"/>
    <property type="evidence" value="ECO:0000315"/>
    <property type="project" value="UniProtKB"/>
</dbReference>
<dbReference type="GO" id="GO:0050909">
    <property type="term" value="P:sensory perception of taste"/>
    <property type="evidence" value="ECO:0000315"/>
    <property type="project" value="CACAO"/>
</dbReference>
<dbReference type="GO" id="GO:0050917">
    <property type="term" value="P:sensory perception of umami taste"/>
    <property type="evidence" value="ECO:0000315"/>
    <property type="project" value="UniProtKB"/>
</dbReference>
<dbReference type="InterPro" id="IPR029569">
    <property type="entry name" value="CALHM"/>
</dbReference>
<dbReference type="PANTHER" id="PTHR32261">
    <property type="entry name" value="CALCIUM HOMEOSTASIS MODULATOR PROTEIN"/>
    <property type="match status" value="1"/>
</dbReference>
<dbReference type="PANTHER" id="PTHR32261:SF2">
    <property type="entry name" value="CALCIUM HOMEOSTASIS MODULATOR PROTEIN 1"/>
    <property type="match status" value="1"/>
</dbReference>
<dbReference type="Pfam" id="PF14798">
    <property type="entry name" value="Ca_hom_mod"/>
    <property type="match status" value="1"/>
</dbReference>
<organism>
    <name type="scientific">Mus musculus</name>
    <name type="common">Mouse</name>
    <dbReference type="NCBI Taxonomy" id="10090"/>
    <lineage>
        <taxon>Eukaryota</taxon>
        <taxon>Metazoa</taxon>
        <taxon>Chordata</taxon>
        <taxon>Craniata</taxon>
        <taxon>Vertebrata</taxon>
        <taxon>Euteleostomi</taxon>
        <taxon>Mammalia</taxon>
        <taxon>Eutheria</taxon>
        <taxon>Euarchontoglires</taxon>
        <taxon>Glires</taxon>
        <taxon>Rodentia</taxon>
        <taxon>Myomorpha</taxon>
        <taxon>Muroidea</taxon>
        <taxon>Muridae</taxon>
        <taxon>Murinae</taxon>
        <taxon>Mus</taxon>
        <taxon>Mus</taxon>
    </lineage>
</organism>